<sequence length="477" mass="50977">MSVLALGLSHRSAPVTLLERVALSGEVRLKLMTEMVNTSAVNEAMVVSTCNRTEVYADVDQFHPGVAAICELLSQYTGVSQEELTQHCYVHYEERAVQHLFSVACGLDSMVVGEGQILGQVRNALKDAQHVGTLGRVLNDLGQRALRVGKRAHTETHLDKAGASMVSFGLTVAGRFLTPDREPQPSAAAAVCPVDGDTGVEVSAALPDPQLLTGRRIMVLGAGSMSALAANTVARHGASTILIANRTFDRAQRLAECLTEGYESVRSSAVPFEDAARHLADIDLVISCTGAQGIVLTAEQVAAGGDRATRPLVFLDLALPHDIDKAVRKLPGVHLVDIEELRDAAEDGTATGQVADLTAVRDIVAEEVAEYQAVRSAERVAPTVVALRSKAQKVVESELERLNGRLPGIDDRTRAEITRTVRRVVDKLLHQPTVRVKQLATGPEGAVYAEALRELFDLDPAIPSAVVKPGTALGEER</sequence>
<evidence type="ECO:0000255" key="1">
    <source>
        <dbReference type="HAMAP-Rule" id="MF_00087"/>
    </source>
</evidence>
<protein>
    <recommendedName>
        <fullName evidence="1">Glutamyl-tRNA reductase</fullName>
        <shortName evidence="1">GluTR</shortName>
        <ecNumber evidence="1">1.2.1.70</ecNumber>
    </recommendedName>
</protein>
<feature type="chain" id="PRO_0000335077" description="Glutamyl-tRNA reductase">
    <location>
        <begin position="1"/>
        <end position="477"/>
    </location>
</feature>
<feature type="active site" description="Nucleophile" evidence="1">
    <location>
        <position position="50"/>
    </location>
</feature>
<feature type="binding site" evidence="1">
    <location>
        <begin position="49"/>
        <end position="52"/>
    </location>
    <ligand>
        <name>substrate</name>
    </ligand>
</feature>
<feature type="binding site" evidence="1">
    <location>
        <position position="109"/>
    </location>
    <ligand>
        <name>substrate</name>
    </ligand>
</feature>
<feature type="binding site" evidence="1">
    <location>
        <begin position="114"/>
        <end position="116"/>
    </location>
    <ligand>
        <name>substrate</name>
    </ligand>
</feature>
<feature type="binding site" evidence="1">
    <location>
        <position position="120"/>
    </location>
    <ligand>
        <name>substrate</name>
    </ligand>
</feature>
<feature type="binding site" evidence="1">
    <location>
        <begin position="221"/>
        <end position="226"/>
    </location>
    <ligand>
        <name>NADP(+)</name>
        <dbReference type="ChEBI" id="CHEBI:58349"/>
    </ligand>
</feature>
<feature type="site" description="Important for activity" evidence="1">
    <location>
        <position position="99"/>
    </location>
</feature>
<reference key="1">
    <citation type="journal article" date="2007" name="J. Bacteriol.">
        <title>Genome sequence and analysis of the soil cellulolytic actinomycete Thermobifida fusca YX.</title>
        <authorList>
            <person name="Lykidis A."/>
            <person name="Mavromatis K."/>
            <person name="Ivanova N."/>
            <person name="Anderson I."/>
            <person name="Land M."/>
            <person name="DiBartolo G."/>
            <person name="Martinez M."/>
            <person name="Lapidus A."/>
            <person name="Lucas S."/>
            <person name="Copeland A."/>
            <person name="Richardson P."/>
            <person name="Wilson D.B."/>
            <person name="Kyrpides N."/>
        </authorList>
    </citation>
    <scope>NUCLEOTIDE SEQUENCE [LARGE SCALE GENOMIC DNA]</scope>
    <source>
        <strain>YX</strain>
    </source>
</reference>
<accession>Q47LA6</accession>
<organism>
    <name type="scientific">Thermobifida fusca (strain YX)</name>
    <dbReference type="NCBI Taxonomy" id="269800"/>
    <lineage>
        <taxon>Bacteria</taxon>
        <taxon>Bacillati</taxon>
        <taxon>Actinomycetota</taxon>
        <taxon>Actinomycetes</taxon>
        <taxon>Streptosporangiales</taxon>
        <taxon>Nocardiopsidaceae</taxon>
        <taxon>Thermobifida</taxon>
    </lineage>
</organism>
<comment type="function">
    <text evidence="1">Catalyzes the NADPH-dependent reduction of glutamyl-tRNA(Glu) to glutamate 1-semialdehyde (GSA).</text>
</comment>
<comment type="catalytic activity">
    <reaction evidence="1">
        <text>(S)-4-amino-5-oxopentanoate + tRNA(Glu) + NADP(+) = L-glutamyl-tRNA(Glu) + NADPH + H(+)</text>
        <dbReference type="Rhea" id="RHEA:12344"/>
        <dbReference type="Rhea" id="RHEA-COMP:9663"/>
        <dbReference type="Rhea" id="RHEA-COMP:9680"/>
        <dbReference type="ChEBI" id="CHEBI:15378"/>
        <dbReference type="ChEBI" id="CHEBI:57501"/>
        <dbReference type="ChEBI" id="CHEBI:57783"/>
        <dbReference type="ChEBI" id="CHEBI:58349"/>
        <dbReference type="ChEBI" id="CHEBI:78442"/>
        <dbReference type="ChEBI" id="CHEBI:78520"/>
        <dbReference type="EC" id="1.2.1.70"/>
    </reaction>
</comment>
<comment type="pathway">
    <text evidence="1">Porphyrin-containing compound metabolism; protoporphyrin-IX biosynthesis; 5-aminolevulinate from L-glutamyl-tRNA(Glu): step 1/2.</text>
</comment>
<comment type="subunit">
    <text evidence="1">Homodimer.</text>
</comment>
<comment type="domain">
    <text evidence="1">Possesses an unusual extended V-shaped dimeric structure with each monomer consisting of three distinct domains arranged along a curved 'spinal' alpha-helix. The N-terminal catalytic domain specifically recognizes the glutamate moiety of the substrate. The second domain is the NADPH-binding domain, and the third C-terminal domain is responsible for dimerization.</text>
</comment>
<comment type="miscellaneous">
    <text evidence="1">During catalysis, the active site Cys acts as a nucleophile attacking the alpha-carbonyl group of tRNA-bound glutamate with the formation of a thioester intermediate between enzyme and glutamate, and the concomitant release of tRNA(Glu). The thioester intermediate is finally reduced by direct hydride transfer from NADPH, to form the product GSA.</text>
</comment>
<comment type="similarity">
    <text evidence="1">Belongs to the glutamyl-tRNA reductase family.</text>
</comment>
<keyword id="KW-0521">NADP</keyword>
<keyword id="KW-0560">Oxidoreductase</keyword>
<keyword id="KW-0627">Porphyrin biosynthesis</keyword>
<gene>
    <name evidence="1" type="primary">hemA</name>
    <name type="ordered locus">Tfu_2733</name>
</gene>
<dbReference type="EC" id="1.2.1.70" evidence="1"/>
<dbReference type="EMBL" id="CP000088">
    <property type="protein sequence ID" value="AAZ56766.1"/>
    <property type="molecule type" value="Genomic_DNA"/>
</dbReference>
<dbReference type="RefSeq" id="WP_011293156.1">
    <property type="nucleotide sequence ID" value="NC_007333.1"/>
</dbReference>
<dbReference type="SMR" id="Q47LA6"/>
<dbReference type="STRING" id="269800.Tfu_2733"/>
<dbReference type="KEGG" id="tfu:Tfu_2733"/>
<dbReference type="eggNOG" id="COG0373">
    <property type="taxonomic scope" value="Bacteria"/>
</dbReference>
<dbReference type="HOGENOM" id="CLU_035113_4_0_11"/>
<dbReference type="OrthoDB" id="110209at2"/>
<dbReference type="UniPathway" id="UPA00251">
    <property type="reaction ID" value="UER00316"/>
</dbReference>
<dbReference type="GO" id="GO:0008883">
    <property type="term" value="F:glutamyl-tRNA reductase activity"/>
    <property type="evidence" value="ECO:0007669"/>
    <property type="project" value="UniProtKB-UniRule"/>
</dbReference>
<dbReference type="GO" id="GO:0050661">
    <property type="term" value="F:NADP binding"/>
    <property type="evidence" value="ECO:0007669"/>
    <property type="project" value="InterPro"/>
</dbReference>
<dbReference type="GO" id="GO:0019353">
    <property type="term" value="P:protoporphyrinogen IX biosynthetic process from glutamate"/>
    <property type="evidence" value="ECO:0007669"/>
    <property type="project" value="TreeGrafter"/>
</dbReference>
<dbReference type="CDD" id="cd05213">
    <property type="entry name" value="NAD_bind_Glutamyl_tRNA_reduct"/>
    <property type="match status" value="1"/>
</dbReference>
<dbReference type="FunFam" id="3.30.460.30:FF:000001">
    <property type="entry name" value="Glutamyl-tRNA reductase"/>
    <property type="match status" value="1"/>
</dbReference>
<dbReference type="Gene3D" id="3.30.460.30">
    <property type="entry name" value="Glutamyl-tRNA reductase, N-terminal domain"/>
    <property type="match status" value="1"/>
</dbReference>
<dbReference type="Gene3D" id="3.40.50.720">
    <property type="entry name" value="NAD(P)-binding Rossmann-like Domain"/>
    <property type="match status" value="1"/>
</dbReference>
<dbReference type="HAMAP" id="MF_00087">
    <property type="entry name" value="Glu_tRNA_reductase"/>
    <property type="match status" value="1"/>
</dbReference>
<dbReference type="InterPro" id="IPR000343">
    <property type="entry name" value="4pyrrol_synth_GluRdtase"/>
</dbReference>
<dbReference type="InterPro" id="IPR015896">
    <property type="entry name" value="4pyrrol_synth_GluRdtase_dimer"/>
</dbReference>
<dbReference type="InterPro" id="IPR015895">
    <property type="entry name" value="4pyrrol_synth_GluRdtase_N"/>
</dbReference>
<dbReference type="InterPro" id="IPR018214">
    <property type="entry name" value="GluRdtase_CS"/>
</dbReference>
<dbReference type="InterPro" id="IPR036453">
    <property type="entry name" value="GluRdtase_dimer_dom_sf"/>
</dbReference>
<dbReference type="InterPro" id="IPR036343">
    <property type="entry name" value="GluRdtase_N_sf"/>
</dbReference>
<dbReference type="InterPro" id="IPR036291">
    <property type="entry name" value="NAD(P)-bd_dom_sf"/>
</dbReference>
<dbReference type="InterPro" id="IPR006151">
    <property type="entry name" value="Shikm_DH/Glu-tRNA_Rdtase"/>
</dbReference>
<dbReference type="NCBIfam" id="NF000744">
    <property type="entry name" value="PRK00045.1-3"/>
    <property type="match status" value="1"/>
</dbReference>
<dbReference type="PANTHER" id="PTHR43013">
    <property type="entry name" value="GLUTAMYL-TRNA REDUCTASE"/>
    <property type="match status" value="1"/>
</dbReference>
<dbReference type="PANTHER" id="PTHR43013:SF1">
    <property type="entry name" value="GLUTAMYL-TRNA REDUCTASE"/>
    <property type="match status" value="1"/>
</dbReference>
<dbReference type="Pfam" id="PF00745">
    <property type="entry name" value="GlutR_dimer"/>
    <property type="match status" value="1"/>
</dbReference>
<dbReference type="Pfam" id="PF05201">
    <property type="entry name" value="GlutR_N"/>
    <property type="match status" value="1"/>
</dbReference>
<dbReference type="Pfam" id="PF01488">
    <property type="entry name" value="Shikimate_DH"/>
    <property type="match status" value="1"/>
</dbReference>
<dbReference type="PIRSF" id="PIRSF000445">
    <property type="entry name" value="4pyrrol_synth_GluRdtase"/>
    <property type="match status" value="1"/>
</dbReference>
<dbReference type="SUPFAM" id="SSF69742">
    <property type="entry name" value="Glutamyl tRNA-reductase catalytic, N-terminal domain"/>
    <property type="match status" value="1"/>
</dbReference>
<dbReference type="SUPFAM" id="SSF69075">
    <property type="entry name" value="Glutamyl tRNA-reductase dimerization domain"/>
    <property type="match status" value="1"/>
</dbReference>
<dbReference type="SUPFAM" id="SSF51735">
    <property type="entry name" value="NAD(P)-binding Rossmann-fold domains"/>
    <property type="match status" value="1"/>
</dbReference>
<dbReference type="PROSITE" id="PS00747">
    <property type="entry name" value="GLUTR"/>
    <property type="match status" value="1"/>
</dbReference>
<proteinExistence type="inferred from homology"/>
<name>HEM1_THEFY</name>